<evidence type="ECO:0000250" key="1"/>
<evidence type="ECO:0000250" key="2">
    <source>
        <dbReference type="UniProtKB" id="O14613"/>
    </source>
</evidence>
<evidence type="ECO:0000250" key="3">
    <source>
        <dbReference type="UniProtKB" id="Q5PQP4"/>
    </source>
</evidence>
<evidence type="ECO:0000255" key="4">
    <source>
        <dbReference type="PROSITE-ProRule" id="PRU00057"/>
    </source>
</evidence>
<evidence type="ECO:0000256" key="5">
    <source>
        <dbReference type="SAM" id="MobiDB-lite"/>
    </source>
</evidence>
<evidence type="ECO:0000305" key="6"/>
<evidence type="ECO:0007744" key="7">
    <source>
    </source>
</evidence>
<comment type="function">
    <text evidence="1">Probably involved in the organization of the actin cytoskeleton. May act downstream of CDC42 to induce actin filament assembly leading to cell shape changes. Induces pseudopodia formation in fibroblasts in a CDC42-dependent manner (By similarity).</text>
</comment>
<comment type="subunit">
    <text evidence="1">Interacts with CDC42 and RHOQ in a GTP-dependent manner, and with SEPT7.</text>
</comment>
<comment type="subcellular location">
    <subcellularLocation>
        <location evidence="1">Endomembrane system</location>
        <topology evidence="1">Peripheral membrane protein</topology>
    </subcellularLocation>
    <subcellularLocation>
        <location evidence="1">Cytoplasm</location>
        <location evidence="1">Cytoskeleton</location>
    </subcellularLocation>
</comment>
<comment type="domain">
    <text evidence="1">The CRIB domain mediates interaction with CDC42.</text>
</comment>
<comment type="similarity">
    <text evidence="6">Belongs to the BORG/CEP family.</text>
</comment>
<dbReference type="EMBL" id="BC034884">
    <property type="protein sequence ID" value="AAH34884.1"/>
    <property type="molecule type" value="mRNA"/>
</dbReference>
<dbReference type="CCDS" id="CCDS29484.1"/>
<dbReference type="RefSeq" id="NP_081048.1">
    <property type="nucleotide sequence ID" value="NM_026772.2"/>
</dbReference>
<dbReference type="BioGRID" id="222493">
    <property type="interactions" value="1"/>
</dbReference>
<dbReference type="FunCoup" id="Q8JZX9">
    <property type="interactions" value="268"/>
</dbReference>
<dbReference type="STRING" id="10090.ENSMUSP00000059883"/>
<dbReference type="iPTMnet" id="Q8JZX9"/>
<dbReference type="PhosphoSitePlus" id="Q8JZX9"/>
<dbReference type="jPOST" id="Q8JZX9"/>
<dbReference type="PaxDb" id="10090-ENSMUSP00000059883"/>
<dbReference type="ProteomicsDB" id="265225"/>
<dbReference type="Pumba" id="Q8JZX9"/>
<dbReference type="Antibodypedia" id="29752">
    <property type="antibodies" value="216 antibodies from 30 providers"/>
</dbReference>
<dbReference type="DNASU" id="104252"/>
<dbReference type="Ensembl" id="ENSMUST00000055458.6">
    <property type="protein sequence ID" value="ENSMUSP00000059883.5"/>
    <property type="gene ID" value="ENSMUSG00000045664.6"/>
</dbReference>
<dbReference type="GeneID" id="104252"/>
<dbReference type="KEGG" id="mmu:104252"/>
<dbReference type="UCSC" id="uc008gfz.2">
    <property type="organism name" value="mouse"/>
</dbReference>
<dbReference type="AGR" id="MGI:1929744"/>
<dbReference type="CTD" id="10435"/>
<dbReference type="MGI" id="MGI:1929744">
    <property type="gene designation" value="Cdc42ep2"/>
</dbReference>
<dbReference type="VEuPathDB" id="HostDB:ENSMUSG00000045664"/>
<dbReference type="eggNOG" id="ENOG502RY28">
    <property type="taxonomic scope" value="Eukaryota"/>
</dbReference>
<dbReference type="GeneTree" id="ENSGT00940000161776"/>
<dbReference type="HOGENOM" id="CLU_073229_0_0_1"/>
<dbReference type="InParanoid" id="Q8JZX9"/>
<dbReference type="OMA" id="DQDLGHM"/>
<dbReference type="OrthoDB" id="9948028at2759"/>
<dbReference type="PhylomeDB" id="Q8JZX9"/>
<dbReference type="TreeFam" id="TF331725"/>
<dbReference type="Reactome" id="R-MMU-5687128">
    <property type="pathway name" value="MAPK6/MAPK4 signaling"/>
</dbReference>
<dbReference type="Reactome" id="R-MMU-9013406">
    <property type="pathway name" value="RHOQ GTPase cycle"/>
</dbReference>
<dbReference type="BioGRID-ORCS" id="104252">
    <property type="hits" value="8 hits in 77 CRISPR screens"/>
</dbReference>
<dbReference type="ChiTaRS" id="Cdc42ep2">
    <property type="organism name" value="mouse"/>
</dbReference>
<dbReference type="PRO" id="PR:Q8JZX9"/>
<dbReference type="Proteomes" id="UP000000589">
    <property type="component" value="Chromosome 19"/>
</dbReference>
<dbReference type="RNAct" id="Q8JZX9">
    <property type="molecule type" value="protein"/>
</dbReference>
<dbReference type="Bgee" id="ENSMUSG00000045664">
    <property type="expression patterns" value="Expressed in tarsal region and 180 other cell types or tissues"/>
</dbReference>
<dbReference type="GO" id="GO:0005829">
    <property type="term" value="C:cytosol"/>
    <property type="evidence" value="ECO:0007669"/>
    <property type="project" value="Ensembl"/>
</dbReference>
<dbReference type="GO" id="GO:0012505">
    <property type="term" value="C:endomembrane system"/>
    <property type="evidence" value="ECO:0007669"/>
    <property type="project" value="UniProtKB-SubCell"/>
</dbReference>
<dbReference type="GO" id="GO:0015630">
    <property type="term" value="C:microtubule cytoskeleton"/>
    <property type="evidence" value="ECO:0007669"/>
    <property type="project" value="Ensembl"/>
</dbReference>
<dbReference type="GO" id="GO:0045335">
    <property type="term" value="C:phagocytic vesicle"/>
    <property type="evidence" value="ECO:0000314"/>
    <property type="project" value="MGI"/>
</dbReference>
<dbReference type="GO" id="GO:0005886">
    <property type="term" value="C:plasma membrane"/>
    <property type="evidence" value="ECO:0007669"/>
    <property type="project" value="Ensembl"/>
</dbReference>
<dbReference type="GO" id="GO:0005096">
    <property type="term" value="F:GTPase activator activity"/>
    <property type="evidence" value="ECO:0007669"/>
    <property type="project" value="Ensembl"/>
</dbReference>
<dbReference type="GO" id="GO:0001515">
    <property type="term" value="F:opioid peptide activity"/>
    <property type="evidence" value="ECO:0000353"/>
    <property type="project" value="MGI"/>
</dbReference>
<dbReference type="GO" id="GO:0031267">
    <property type="term" value="F:small GTPase binding"/>
    <property type="evidence" value="ECO:0007669"/>
    <property type="project" value="Ensembl"/>
</dbReference>
<dbReference type="GO" id="GO:0030036">
    <property type="term" value="P:actin cytoskeleton organization"/>
    <property type="evidence" value="ECO:0007669"/>
    <property type="project" value="Ensembl"/>
</dbReference>
<dbReference type="GO" id="GO:0071346">
    <property type="term" value="P:cellular response to type II interferon"/>
    <property type="evidence" value="ECO:0000314"/>
    <property type="project" value="MGI"/>
</dbReference>
<dbReference type="GO" id="GO:0030838">
    <property type="term" value="P:positive regulation of actin filament polymerization"/>
    <property type="evidence" value="ECO:0007669"/>
    <property type="project" value="Ensembl"/>
</dbReference>
<dbReference type="GO" id="GO:0031274">
    <property type="term" value="P:positive regulation of pseudopodium assembly"/>
    <property type="evidence" value="ECO:0007669"/>
    <property type="project" value="Ensembl"/>
</dbReference>
<dbReference type="GO" id="GO:0008360">
    <property type="term" value="P:regulation of cell shape"/>
    <property type="evidence" value="ECO:0007669"/>
    <property type="project" value="UniProtKB-KW"/>
</dbReference>
<dbReference type="InterPro" id="IPR029273">
    <property type="entry name" value="Cdc42_effect-like"/>
</dbReference>
<dbReference type="InterPro" id="IPR051296">
    <property type="entry name" value="Cdc42_Effector_BORG/CEP"/>
</dbReference>
<dbReference type="InterPro" id="IPR017363">
    <property type="entry name" value="Cdc42_effector_prot_2"/>
</dbReference>
<dbReference type="InterPro" id="IPR000095">
    <property type="entry name" value="CRIB_dom"/>
</dbReference>
<dbReference type="PANTHER" id="PTHR15344:SF4">
    <property type="entry name" value="CDC42 EFFECTOR PROTEIN 2"/>
    <property type="match status" value="1"/>
</dbReference>
<dbReference type="PANTHER" id="PTHR15344">
    <property type="entry name" value="CDC42 EFFECTOR PROTEIN BORG"/>
    <property type="match status" value="1"/>
</dbReference>
<dbReference type="Pfam" id="PF14957">
    <property type="entry name" value="BORG_CEP"/>
    <property type="match status" value="1"/>
</dbReference>
<dbReference type="Pfam" id="PF00786">
    <property type="entry name" value="PBD"/>
    <property type="match status" value="1"/>
</dbReference>
<dbReference type="PIRSF" id="PIRSF038036">
    <property type="entry name" value="Cdc42_effector_p2"/>
    <property type="match status" value="1"/>
</dbReference>
<dbReference type="SMART" id="SM00285">
    <property type="entry name" value="PBD"/>
    <property type="match status" value="1"/>
</dbReference>
<dbReference type="PROSITE" id="PS50108">
    <property type="entry name" value="CRIB"/>
    <property type="match status" value="1"/>
</dbReference>
<accession>Q8JZX9</accession>
<protein>
    <recommendedName>
        <fullName>Cdc42 effector protein 2</fullName>
    </recommendedName>
    <alternativeName>
        <fullName>Binder of Rho GTPases 1</fullName>
    </alternativeName>
</protein>
<reference key="1">
    <citation type="journal article" date="2004" name="Genome Res.">
        <title>The status, quality, and expansion of the NIH full-length cDNA project: the Mammalian Gene Collection (MGC).</title>
        <authorList>
            <consortium name="The MGC Project Team"/>
        </authorList>
    </citation>
    <scope>NUCLEOTIDE SEQUENCE [LARGE SCALE MRNA]</scope>
    <source>
        <strain>Czech II</strain>
        <tissue>Lung</tissue>
    </source>
</reference>
<reference key="2">
    <citation type="journal article" date="2010" name="Cell">
        <title>A tissue-specific atlas of mouse protein phosphorylation and expression.</title>
        <authorList>
            <person name="Huttlin E.L."/>
            <person name="Jedrychowski M.P."/>
            <person name="Elias J.E."/>
            <person name="Goswami T."/>
            <person name="Rad R."/>
            <person name="Beausoleil S.A."/>
            <person name="Villen J."/>
            <person name="Haas W."/>
            <person name="Sowa M.E."/>
            <person name="Gygi S.P."/>
        </authorList>
    </citation>
    <scope>PHOSPHORYLATION [LARGE SCALE ANALYSIS] AT SER-137; SER-141 AND SER-145</scope>
    <scope>IDENTIFICATION BY MASS SPECTROMETRY [LARGE SCALE ANALYSIS]</scope>
    <source>
        <tissue>Brain</tissue>
        <tissue>Brown adipose tissue</tissue>
        <tissue>Heart</tissue>
        <tissue>Kidney</tissue>
        <tissue>Liver</tissue>
        <tissue>Lung</tissue>
        <tissue>Spleen</tissue>
        <tissue>Testis</tissue>
    </source>
</reference>
<name>BORG1_MOUSE</name>
<sequence>MSTKVPIYLKRGSRKGKKEKLRDLLSSDMISPPLGDFRHTIHIGSGGGDDMFGDISFLQGKFHLLPGTAVEEAEEDGSFDLPFQFTRTTTVCGRELPDGLSPLLKNAISLPVIGGPQALTLPTAQAPPKPPRLHLESPQPSPQPSPQGAGNVDVWRIPEAGSPHNGMSPEPEAEEPFLSHASSLLSLHVDLGPSILDDVLQIMDHDLGRVQIPT</sequence>
<proteinExistence type="evidence at protein level"/>
<keyword id="KW-0007">Acetylation</keyword>
<keyword id="KW-0133">Cell shape</keyword>
<keyword id="KW-0963">Cytoplasm</keyword>
<keyword id="KW-0206">Cytoskeleton</keyword>
<keyword id="KW-0472">Membrane</keyword>
<keyword id="KW-0597">Phosphoprotein</keyword>
<keyword id="KW-1185">Reference proteome</keyword>
<gene>
    <name type="primary">Cdc42ep2</name>
    <name type="synonym">Borg1</name>
    <name type="synonym">Cep2</name>
</gene>
<feature type="initiator methionine" description="Removed" evidence="2">
    <location>
        <position position="1"/>
    </location>
</feature>
<feature type="chain" id="PRO_0000212649" description="Cdc42 effector protein 2">
    <location>
        <begin position="2"/>
        <end position="214"/>
    </location>
</feature>
<feature type="domain" description="CRIB" evidence="4">
    <location>
        <begin position="30"/>
        <end position="44"/>
    </location>
</feature>
<feature type="region of interest" description="Disordered" evidence="5">
    <location>
        <begin position="119"/>
        <end position="177"/>
    </location>
</feature>
<feature type="modified residue" description="N-acetylserine" evidence="2">
    <location>
        <position position="2"/>
    </location>
</feature>
<feature type="modified residue" description="Phosphoserine" evidence="2">
    <location>
        <position position="31"/>
    </location>
</feature>
<feature type="modified residue" description="Phosphoserine" evidence="3">
    <location>
        <position position="101"/>
    </location>
</feature>
<feature type="modified residue" description="Phosphoserine" evidence="7">
    <location>
        <position position="137"/>
    </location>
</feature>
<feature type="modified residue" description="Phosphoserine" evidence="7">
    <location>
        <position position="141"/>
    </location>
</feature>
<feature type="modified residue" description="Phosphoserine" evidence="7">
    <location>
        <position position="145"/>
    </location>
</feature>
<organism>
    <name type="scientific">Mus musculus</name>
    <name type="common">Mouse</name>
    <dbReference type="NCBI Taxonomy" id="10090"/>
    <lineage>
        <taxon>Eukaryota</taxon>
        <taxon>Metazoa</taxon>
        <taxon>Chordata</taxon>
        <taxon>Craniata</taxon>
        <taxon>Vertebrata</taxon>
        <taxon>Euteleostomi</taxon>
        <taxon>Mammalia</taxon>
        <taxon>Eutheria</taxon>
        <taxon>Euarchontoglires</taxon>
        <taxon>Glires</taxon>
        <taxon>Rodentia</taxon>
        <taxon>Myomorpha</taxon>
        <taxon>Muroidea</taxon>
        <taxon>Muridae</taxon>
        <taxon>Murinae</taxon>
        <taxon>Mus</taxon>
        <taxon>Mus</taxon>
    </lineage>
</organism>